<reference key="1">
    <citation type="journal article" date="1989" name="Virus Res.">
        <title>Molecular cloning and sequencing of influenza virus A/Victoria/3/75 polymerase genes: sequence evolution and prediction of possible functional domains.</title>
        <authorList>
            <person name="de la Luna S."/>
            <person name="Martinez C."/>
            <person name="Ortin J."/>
        </authorList>
    </citation>
    <scope>NUCLEOTIDE SEQUENCE</scope>
</reference>
<protein>
    <recommendedName>
        <fullName evidence="1">RNA-directed RNA polymerase catalytic subunit</fullName>
        <ecNumber evidence="1">2.7.7.48</ecNumber>
    </recommendedName>
    <alternativeName>
        <fullName evidence="1">Polymerase basic protein 1</fullName>
        <shortName evidence="1">PB1</shortName>
    </alternativeName>
    <alternativeName>
        <fullName evidence="1">RNA-directed RNA polymerase subunit P1</fullName>
    </alternativeName>
</protein>
<proteinExistence type="inferred from homology"/>
<gene>
    <name evidence="1" type="primary">PB1</name>
</gene>
<evidence type="ECO:0000255" key="1">
    <source>
        <dbReference type="HAMAP-Rule" id="MF_04065"/>
    </source>
</evidence>
<evidence type="ECO:0000256" key="2">
    <source>
        <dbReference type="SAM" id="MobiDB-lite"/>
    </source>
</evidence>
<organismHost>
    <name type="scientific">Aves</name>
    <dbReference type="NCBI Taxonomy" id="8782"/>
</organismHost>
<organismHost>
    <name type="scientific">Cetacea</name>
    <name type="common">whales</name>
    <dbReference type="NCBI Taxonomy" id="9721"/>
</organismHost>
<organismHost>
    <name type="scientific">Homo sapiens</name>
    <name type="common">Human</name>
    <dbReference type="NCBI Taxonomy" id="9606"/>
</organismHost>
<organismHost>
    <name type="scientific">Phocidae</name>
    <name type="common">true seals</name>
    <dbReference type="NCBI Taxonomy" id="9709"/>
</organismHost>
<organismHost>
    <name type="scientific">Sus scrofa</name>
    <name type="common">Pig</name>
    <dbReference type="NCBI Taxonomy" id="9823"/>
</organismHost>
<name>RDRP_I75A3</name>
<sequence length="757" mass="86451">MDVNPTLLFLKVPAQNAISTTFPYTGDPPYSHGTGTGYTMDTVNRTHQYSEKGKWTTNTETGAAQLNPIDGPLPEDNEPSGYAQTDCVLEAMAFLEESHPGIFENSCLETMEVVQQTRVDRLTQGRQTYDWTLNRNQPAATALANTIEVFRSNGLIANESGRLIDFLKDVIESMDKEEMEITTHFQRKRRVRDNMTKKMVTQRTIGKKKQRVNKRSYLIRALTLNTMTKDAERGKLKRRAIATPGMQIRGFVYFVETLARSICEKLEQSGLPVGGNEKKAKLANVVRKMMTNSQDTELSFTITGDNTKWNENQNPRMFLAMITYITKNQPEWFRNILSIAPIMFSNKMARLGKGYMFESKRMKLRTQIPAEMLASIDLKYFNESTRKKIEKIRPLLIDGTASLSPGMMMGMFNMLSTVLGVSILNLGQKKYTKTTYWWDGLQSSDDFALIVNAPNHEGIQAGVDRFYRTCKLVGINMSKKKSYINRTGTFEFTSFFYRYGFVANFSMELPSFGVSGINESADMSIGVTVIKNNMINNDLGPATAQMALQLFIKDYRYTYRCHRGDTQIQTRRSFELKKLWEQTRSKAGLLVSDGGPNLYNIRNLHIPEVCLKWELMDEDYQGRLCNPLNPFVSHKEIESVNNAVVMPAHGPAKSMEYDAVATTHSWIPKRNRSILNTSQRGILEDEQMYQKCCNLFEKFFPSSSYRRPVGISSMVEAMVSRARIDARIDFESGRIKKEEFSEIMKICSTIEELRRQK</sequence>
<organism>
    <name type="scientific">Influenza A virus (strain A/Victoria/3/1975 H3N2)</name>
    <dbReference type="NCBI Taxonomy" id="392809"/>
    <lineage>
        <taxon>Viruses</taxon>
        <taxon>Riboviria</taxon>
        <taxon>Orthornavirae</taxon>
        <taxon>Negarnaviricota</taxon>
        <taxon>Polyploviricotina</taxon>
        <taxon>Insthoviricetes</taxon>
        <taxon>Articulavirales</taxon>
        <taxon>Orthomyxoviridae</taxon>
        <taxon>Alphainfluenzavirus</taxon>
        <taxon>Alphainfluenzavirus influenzae</taxon>
        <taxon>Influenza A virus</taxon>
    </lineage>
</organism>
<dbReference type="EC" id="2.7.7.48" evidence="1"/>
<dbReference type="SMR" id="P31341"/>
<dbReference type="DIP" id="DIP-61896N"/>
<dbReference type="IntAct" id="P31341">
    <property type="interactions" value="2"/>
</dbReference>
<dbReference type="GO" id="GO:0030430">
    <property type="term" value="C:host cell cytoplasm"/>
    <property type="evidence" value="ECO:0007669"/>
    <property type="project" value="UniProtKB-SubCell"/>
</dbReference>
<dbReference type="GO" id="GO:0042025">
    <property type="term" value="C:host cell nucleus"/>
    <property type="evidence" value="ECO:0007669"/>
    <property type="project" value="UniProtKB-SubCell"/>
</dbReference>
<dbReference type="GO" id="GO:0000166">
    <property type="term" value="F:nucleotide binding"/>
    <property type="evidence" value="ECO:0007669"/>
    <property type="project" value="UniProtKB-UniRule"/>
</dbReference>
<dbReference type="GO" id="GO:0003723">
    <property type="term" value="F:RNA binding"/>
    <property type="evidence" value="ECO:0007669"/>
    <property type="project" value="InterPro"/>
</dbReference>
<dbReference type="GO" id="GO:0003968">
    <property type="term" value="F:RNA-directed RNA polymerase activity"/>
    <property type="evidence" value="ECO:0007669"/>
    <property type="project" value="UniProtKB-UniRule"/>
</dbReference>
<dbReference type="GO" id="GO:0006351">
    <property type="term" value="P:DNA-templated transcription"/>
    <property type="evidence" value="ECO:0007669"/>
    <property type="project" value="UniProtKB-UniRule"/>
</dbReference>
<dbReference type="GO" id="GO:0039657">
    <property type="term" value="P:symbiont-mediated suppression of host gene expression"/>
    <property type="evidence" value="ECO:0007669"/>
    <property type="project" value="UniProtKB-KW"/>
</dbReference>
<dbReference type="GO" id="GO:0039523">
    <property type="term" value="P:symbiont-mediated suppression of host mRNA transcription via inhibition of RNA polymerase II activity"/>
    <property type="evidence" value="ECO:0007669"/>
    <property type="project" value="UniProtKB-UniRule"/>
</dbReference>
<dbReference type="GO" id="GO:0039694">
    <property type="term" value="P:viral RNA genome replication"/>
    <property type="evidence" value="ECO:0007669"/>
    <property type="project" value="UniProtKB-UniRule"/>
</dbReference>
<dbReference type="GO" id="GO:0019083">
    <property type="term" value="P:viral transcription"/>
    <property type="evidence" value="ECO:0007669"/>
    <property type="project" value="UniProtKB-KW"/>
</dbReference>
<dbReference type="Gene3D" id="6.10.140.720">
    <property type="match status" value="1"/>
</dbReference>
<dbReference type="HAMAP" id="MF_04065">
    <property type="entry name" value="INFV_RDRP"/>
    <property type="match status" value="1"/>
</dbReference>
<dbReference type="InterPro" id="IPR007099">
    <property type="entry name" value="RNA-dir_pol_NSvirus"/>
</dbReference>
<dbReference type="InterPro" id="IPR001407">
    <property type="entry name" value="RNA_pol_PB1_influenza"/>
</dbReference>
<dbReference type="Pfam" id="PF00602">
    <property type="entry name" value="Flu_PB1"/>
    <property type="match status" value="1"/>
</dbReference>
<dbReference type="PIRSF" id="PIRSF000827">
    <property type="entry name" value="RdRPol_OMV"/>
    <property type="match status" value="1"/>
</dbReference>
<dbReference type="PROSITE" id="PS50525">
    <property type="entry name" value="RDRP_SSRNA_NEG_SEG"/>
    <property type="match status" value="1"/>
</dbReference>
<keyword id="KW-1262">Eukaryotic host gene expression shutoff by virus</keyword>
<keyword id="KW-1191">Eukaryotic host transcription shutoff by virus</keyword>
<keyword id="KW-1035">Host cytoplasm</keyword>
<keyword id="KW-1190">Host gene expression shutoff by virus</keyword>
<keyword id="KW-1048">Host nucleus</keyword>
<keyword id="KW-0945">Host-virus interaction</keyword>
<keyword id="KW-1104">Inhibition of host RNA polymerase II by virus</keyword>
<keyword id="KW-0547">Nucleotide-binding</keyword>
<keyword id="KW-0548">Nucleotidyltransferase</keyword>
<keyword id="KW-0597">Phosphoprotein</keyword>
<keyword id="KW-0696">RNA-directed RNA polymerase</keyword>
<keyword id="KW-0808">Transferase</keyword>
<keyword id="KW-0693">Viral RNA replication</keyword>
<keyword id="KW-1195">Viral transcription</keyword>
<accession>P31341</accession>
<feature type="chain" id="PRO_0000078766" description="RNA-directed RNA polymerase catalytic subunit">
    <location>
        <begin position="1"/>
        <end position="757"/>
    </location>
</feature>
<feature type="domain" description="RdRp catalytic" evidence="1">
    <location>
        <begin position="286"/>
        <end position="483"/>
    </location>
</feature>
<feature type="region of interest" description="Disordered" evidence="2">
    <location>
        <begin position="54"/>
        <end position="77"/>
    </location>
</feature>
<feature type="region of interest" description="Promoter-binding site" evidence="1">
    <location>
        <begin position="249"/>
        <end position="256"/>
    </location>
</feature>
<feature type="short sequence motif" description="Nuclear localization signal" evidence="1">
    <location>
        <begin position="187"/>
        <end position="195"/>
    </location>
</feature>
<feature type="short sequence motif" description="Nuclear localization signal" evidence="1">
    <location>
        <begin position="203"/>
        <end position="216"/>
    </location>
</feature>
<feature type="compositionally biased region" description="Polar residues" evidence="2">
    <location>
        <begin position="55"/>
        <end position="64"/>
    </location>
</feature>
<comment type="function">
    <text evidence="1">RNA-dependent RNA polymerase which is responsible for replication and transcription of virus RNA segments. The transcription of viral mRNAs occurs by a unique mechanism called cap-snatching. 5' methylated caps of cellular mRNAs are cleaved after 10-13 nucleotides by PA. In turn, these short capped RNAs are used as primers by PB1 for transcription of viral mRNAs. During virus replication, PB1 initiates RNA synthesis and copy vRNA into complementary RNA (cRNA) which in turn serves as a template for the production of more vRNAs.</text>
</comment>
<comment type="catalytic activity">
    <reaction evidence="1">
        <text>RNA(n) + a ribonucleoside 5'-triphosphate = RNA(n+1) + diphosphate</text>
        <dbReference type="Rhea" id="RHEA:21248"/>
        <dbReference type="Rhea" id="RHEA-COMP:14527"/>
        <dbReference type="Rhea" id="RHEA-COMP:17342"/>
        <dbReference type="ChEBI" id="CHEBI:33019"/>
        <dbReference type="ChEBI" id="CHEBI:61557"/>
        <dbReference type="ChEBI" id="CHEBI:140395"/>
        <dbReference type="EC" id="2.7.7.48"/>
    </reaction>
</comment>
<comment type="subunit">
    <text evidence="1">Influenza RNA polymerase is composed of three subunits: PB1, PB2 and PA. Interacts (via N-terminus) with PA (via C-terminus). Interacts (via C-terminus) with PB2 (via N-terminus); this interaction is essential for transcription initiation.</text>
</comment>
<comment type="subcellular location">
    <subcellularLocation>
        <location evidence="1">Host nucleus</location>
    </subcellularLocation>
    <subcellularLocation>
        <location evidence="1">Host cytoplasm</location>
    </subcellularLocation>
</comment>
<comment type="PTM">
    <text evidence="1">Phosphorylated by host PRKCA.</text>
</comment>
<comment type="similarity">
    <text evidence="1">Belongs to the influenza viruses polymerase PB1 family.</text>
</comment>